<accession>B5BCQ0</accession>
<protein>
    <recommendedName>
        <fullName evidence="1">Nucleoside triphosphatase NudI</fullName>
        <ecNumber evidence="1">3.6.1.9</ecNumber>
    </recommendedName>
    <alternativeName>
        <fullName evidence="1">Nucleotide diphosphatase NudI</fullName>
    </alternativeName>
    <alternativeName>
        <fullName evidence="1">Pyrimidine deoxynucleoside triphosphate diphosphatase</fullName>
    </alternativeName>
    <alternativeName>
        <fullName evidence="1">dCTP diphosphatase</fullName>
        <ecNumber evidence="1">3.6.1.12</ecNumber>
    </alternativeName>
    <alternativeName>
        <fullName evidence="1">dTTP diphosphatase</fullName>
        <ecNumber evidence="1">3.6.1.-</ecNumber>
    </alternativeName>
    <alternativeName>
        <fullName evidence="1">dUTP diphosphatase</fullName>
        <ecNumber evidence="1">3.6.1.23</ecNumber>
    </alternativeName>
</protein>
<evidence type="ECO:0000255" key="1">
    <source>
        <dbReference type="HAMAP-Rule" id="MF_01846"/>
    </source>
</evidence>
<keyword id="KW-0378">Hydrolase</keyword>
<keyword id="KW-0460">Magnesium</keyword>
<comment type="function">
    <text evidence="1">Catalyzes the hydrolysis of nucleoside triphosphates, with a preference for pyrimidine deoxynucleoside triphosphates (dUTP, dTTP and dCTP).</text>
</comment>
<comment type="catalytic activity">
    <reaction evidence="1">
        <text>a ribonucleoside 5'-triphosphate + H2O = a ribonucleoside 5'-phosphate + diphosphate + H(+)</text>
        <dbReference type="Rhea" id="RHEA:23996"/>
        <dbReference type="ChEBI" id="CHEBI:15377"/>
        <dbReference type="ChEBI" id="CHEBI:15378"/>
        <dbReference type="ChEBI" id="CHEBI:33019"/>
        <dbReference type="ChEBI" id="CHEBI:58043"/>
        <dbReference type="ChEBI" id="CHEBI:61557"/>
        <dbReference type="EC" id="3.6.1.9"/>
    </reaction>
</comment>
<comment type="catalytic activity">
    <reaction evidence="1">
        <text>a 2'-deoxyribonucleoside 5'-triphosphate + H2O = a 2'-deoxyribonucleoside 5'-phosphate + diphosphate + H(+)</text>
        <dbReference type="Rhea" id="RHEA:44644"/>
        <dbReference type="ChEBI" id="CHEBI:15377"/>
        <dbReference type="ChEBI" id="CHEBI:15378"/>
        <dbReference type="ChEBI" id="CHEBI:33019"/>
        <dbReference type="ChEBI" id="CHEBI:61560"/>
        <dbReference type="ChEBI" id="CHEBI:65317"/>
        <dbReference type="EC" id="3.6.1.9"/>
    </reaction>
</comment>
<comment type="catalytic activity">
    <reaction evidence="1">
        <text>dUTP + H2O = dUMP + diphosphate + H(+)</text>
        <dbReference type="Rhea" id="RHEA:10248"/>
        <dbReference type="ChEBI" id="CHEBI:15377"/>
        <dbReference type="ChEBI" id="CHEBI:15378"/>
        <dbReference type="ChEBI" id="CHEBI:33019"/>
        <dbReference type="ChEBI" id="CHEBI:61555"/>
        <dbReference type="ChEBI" id="CHEBI:246422"/>
        <dbReference type="EC" id="3.6.1.9"/>
    </reaction>
</comment>
<comment type="catalytic activity">
    <reaction evidence="1">
        <text>dUTP + H2O = dUMP + diphosphate + H(+)</text>
        <dbReference type="Rhea" id="RHEA:10248"/>
        <dbReference type="ChEBI" id="CHEBI:15377"/>
        <dbReference type="ChEBI" id="CHEBI:15378"/>
        <dbReference type="ChEBI" id="CHEBI:33019"/>
        <dbReference type="ChEBI" id="CHEBI:61555"/>
        <dbReference type="ChEBI" id="CHEBI:246422"/>
        <dbReference type="EC" id="3.6.1.23"/>
    </reaction>
</comment>
<comment type="catalytic activity">
    <reaction evidence="1">
        <text>dTTP + H2O = dTMP + diphosphate + H(+)</text>
        <dbReference type="Rhea" id="RHEA:28534"/>
        <dbReference type="ChEBI" id="CHEBI:15377"/>
        <dbReference type="ChEBI" id="CHEBI:15378"/>
        <dbReference type="ChEBI" id="CHEBI:33019"/>
        <dbReference type="ChEBI" id="CHEBI:37568"/>
        <dbReference type="ChEBI" id="CHEBI:63528"/>
        <dbReference type="EC" id="3.6.1.9"/>
    </reaction>
</comment>
<comment type="catalytic activity">
    <reaction evidence="1">
        <text>dCTP + H2O = dCMP + diphosphate + H(+)</text>
        <dbReference type="Rhea" id="RHEA:22636"/>
        <dbReference type="ChEBI" id="CHEBI:15377"/>
        <dbReference type="ChEBI" id="CHEBI:15378"/>
        <dbReference type="ChEBI" id="CHEBI:33019"/>
        <dbReference type="ChEBI" id="CHEBI:57566"/>
        <dbReference type="ChEBI" id="CHEBI:61481"/>
        <dbReference type="EC" id="3.6.1.9"/>
    </reaction>
</comment>
<comment type="catalytic activity">
    <reaction evidence="1">
        <text>dCTP + H2O = dCMP + diphosphate + H(+)</text>
        <dbReference type="Rhea" id="RHEA:22636"/>
        <dbReference type="ChEBI" id="CHEBI:15377"/>
        <dbReference type="ChEBI" id="CHEBI:15378"/>
        <dbReference type="ChEBI" id="CHEBI:33019"/>
        <dbReference type="ChEBI" id="CHEBI:57566"/>
        <dbReference type="ChEBI" id="CHEBI:61481"/>
        <dbReference type="EC" id="3.6.1.12"/>
    </reaction>
</comment>
<comment type="cofactor">
    <cofactor evidence="1">
        <name>Mg(2+)</name>
        <dbReference type="ChEBI" id="CHEBI:18420"/>
    </cofactor>
</comment>
<comment type="subunit">
    <text evidence="1">Monomer.</text>
</comment>
<comment type="similarity">
    <text evidence="1">Belongs to the Nudix hydrolase family. NudI subfamily.</text>
</comment>
<dbReference type="EC" id="3.6.1.9" evidence="1"/>
<dbReference type="EC" id="3.6.1.12" evidence="1"/>
<dbReference type="EC" id="3.6.1.-" evidence="1"/>
<dbReference type="EC" id="3.6.1.23" evidence="1"/>
<dbReference type="EMBL" id="FM200053">
    <property type="protein sequence ID" value="CAR58661.1"/>
    <property type="molecule type" value="Genomic_DNA"/>
</dbReference>
<dbReference type="RefSeq" id="WP_001249902.1">
    <property type="nucleotide sequence ID" value="NC_011147.1"/>
</dbReference>
<dbReference type="SMR" id="B5BCQ0"/>
<dbReference type="KEGG" id="sek:SSPA0532"/>
<dbReference type="HOGENOM" id="CLU_037162_31_0_6"/>
<dbReference type="Proteomes" id="UP000001869">
    <property type="component" value="Chromosome"/>
</dbReference>
<dbReference type="GO" id="GO:0047840">
    <property type="term" value="F:dCTP diphosphatase activity"/>
    <property type="evidence" value="ECO:0007669"/>
    <property type="project" value="UniProtKB-EC"/>
</dbReference>
<dbReference type="GO" id="GO:0036218">
    <property type="term" value="F:dTTP diphosphatase activity"/>
    <property type="evidence" value="ECO:0007669"/>
    <property type="project" value="RHEA"/>
</dbReference>
<dbReference type="GO" id="GO:0004170">
    <property type="term" value="F:dUTP diphosphatase activity"/>
    <property type="evidence" value="ECO:0007669"/>
    <property type="project" value="UniProtKB-EC"/>
</dbReference>
<dbReference type="GO" id="GO:0000287">
    <property type="term" value="F:magnesium ion binding"/>
    <property type="evidence" value="ECO:0007669"/>
    <property type="project" value="UniProtKB-UniRule"/>
</dbReference>
<dbReference type="CDD" id="cd04696">
    <property type="entry name" value="NUDIX_NudI"/>
    <property type="match status" value="1"/>
</dbReference>
<dbReference type="Gene3D" id="3.90.79.10">
    <property type="entry name" value="Nucleoside Triphosphate Pyrophosphohydrolase"/>
    <property type="match status" value="1"/>
</dbReference>
<dbReference type="HAMAP" id="MF_01846">
    <property type="entry name" value="Nudix_NudI"/>
    <property type="match status" value="1"/>
</dbReference>
<dbReference type="InterPro" id="IPR023781">
    <property type="entry name" value="Nucleoside_triphosphatase_NudI"/>
</dbReference>
<dbReference type="InterPro" id="IPR020476">
    <property type="entry name" value="Nudix_hydrolase"/>
</dbReference>
<dbReference type="InterPro" id="IPR015797">
    <property type="entry name" value="NUDIX_hydrolase-like_dom_sf"/>
</dbReference>
<dbReference type="InterPro" id="IPR020084">
    <property type="entry name" value="NUDIX_hydrolase_CS"/>
</dbReference>
<dbReference type="InterPro" id="IPR000086">
    <property type="entry name" value="NUDIX_hydrolase_dom"/>
</dbReference>
<dbReference type="NCBIfam" id="NF012016">
    <property type="entry name" value="PRK15472.1"/>
    <property type="match status" value="1"/>
</dbReference>
<dbReference type="PANTHER" id="PTHR43046">
    <property type="entry name" value="GDP-MANNOSE MANNOSYL HYDROLASE"/>
    <property type="match status" value="1"/>
</dbReference>
<dbReference type="PANTHER" id="PTHR43046:SF14">
    <property type="entry name" value="MUTT_NUDIX FAMILY PROTEIN"/>
    <property type="match status" value="1"/>
</dbReference>
<dbReference type="Pfam" id="PF00293">
    <property type="entry name" value="NUDIX"/>
    <property type="match status" value="1"/>
</dbReference>
<dbReference type="PRINTS" id="PR00502">
    <property type="entry name" value="NUDIXFAMILY"/>
</dbReference>
<dbReference type="SUPFAM" id="SSF55811">
    <property type="entry name" value="Nudix"/>
    <property type="match status" value="1"/>
</dbReference>
<dbReference type="PROSITE" id="PS51462">
    <property type="entry name" value="NUDIX"/>
    <property type="match status" value="1"/>
</dbReference>
<dbReference type="PROSITE" id="PS00893">
    <property type="entry name" value="NUDIX_BOX"/>
    <property type="match status" value="1"/>
</dbReference>
<name>NUDI_SALPK</name>
<reference key="1">
    <citation type="journal article" date="2009" name="BMC Genomics">
        <title>Pseudogene accumulation in the evolutionary histories of Salmonella enterica serovars Paratyphi A and Typhi.</title>
        <authorList>
            <person name="Holt K.E."/>
            <person name="Thomson N.R."/>
            <person name="Wain J."/>
            <person name="Langridge G.C."/>
            <person name="Hasan R."/>
            <person name="Bhutta Z.A."/>
            <person name="Quail M.A."/>
            <person name="Norbertczak H."/>
            <person name="Walker D."/>
            <person name="Simmonds M."/>
            <person name="White B."/>
            <person name="Bason N."/>
            <person name="Mungall K."/>
            <person name="Dougan G."/>
            <person name="Parkhill J."/>
        </authorList>
    </citation>
    <scope>NUCLEOTIDE SEQUENCE [LARGE SCALE GENOMIC DNA]</scope>
    <source>
        <strain>AKU_12601</strain>
    </source>
</reference>
<sequence length="141" mass="16288">MRQRTIVCPLIQNDGCYLLCKMADNRGVFPGQWALSGGGVEPGERIEEALRREIREELGEQLILSDITPWTFRDDIRVKTYADGRQEEIYMIYLIFDCVSANRDICINDEFQDYAWVKPEELALYDLNVATRHTLALKGLL</sequence>
<proteinExistence type="inferred from homology"/>
<feature type="chain" id="PRO_1000188493" description="Nucleoside triphosphatase NudI">
    <location>
        <begin position="1"/>
        <end position="141"/>
    </location>
</feature>
<feature type="domain" description="Nudix hydrolase" evidence="1">
    <location>
        <begin position="1"/>
        <end position="141"/>
    </location>
</feature>
<feature type="short sequence motif" description="Nudix box">
    <location>
        <begin position="38"/>
        <end position="59"/>
    </location>
</feature>
<organism>
    <name type="scientific">Salmonella paratyphi A (strain AKU_12601)</name>
    <dbReference type="NCBI Taxonomy" id="554290"/>
    <lineage>
        <taxon>Bacteria</taxon>
        <taxon>Pseudomonadati</taxon>
        <taxon>Pseudomonadota</taxon>
        <taxon>Gammaproteobacteria</taxon>
        <taxon>Enterobacterales</taxon>
        <taxon>Enterobacteriaceae</taxon>
        <taxon>Salmonella</taxon>
    </lineage>
</organism>
<gene>
    <name evidence="1" type="primary">nudI</name>
    <name type="ordered locus">SSPA0532</name>
</gene>